<proteinExistence type="evidence at protein level"/>
<comment type="function">
    <text evidence="1 3">Component of the cytochrome c oxidase, the last enzyme in the mitochondrial electron transport chain which drives oxidative phosphorylation. The respiratory chain contains 3 multisubunit complexes succinate dehydrogenase (complex II, CII), ubiquinol-cytochrome c oxidoreductase (cytochrome b-c1 complex, complex III, CIII) and cytochrome c oxidase (complex IV, CIV), that cooperate to transfer electrons derived from NADH and succinate to molecular oxygen, creating an electrochemical gradient over the inner membrane that drives transmembrane transport and the ATP synthase. Cytochrome c oxidase is the component of the respiratory chain that catalyzes the reduction of oxygen to water. Electrons originating from reduced cytochrome c in the intermembrane space (IMS) are transferred via the dinuclear copper A center (CU(A)) of subunit 2 and heme A of subunit 1 to the active site in subunit 1, a binuclear center (BNC) formed by heme A3 and copper B (CU(B)). The BNC reduces molecular oxygen to 2 water molecules using 4 electrons from cytochrome c in the IMS and 4 protons from the mitochondrial matrix (By similarity). Plays a role in proper central nervous system (CNS) development in vertebrates (PubMed:23122588).</text>
</comment>
<comment type="pathway">
    <text evidence="1">Energy metabolism; oxidative phosphorylation.</text>
</comment>
<comment type="subunit">
    <text evidence="4 5">Component of the cytochrome c oxidase (complex IV, CIV), a multisubunit enzyme composed of 14 subunits. The complex is composed of a catalytic core of 3 subunits MT-CO1, MT-CO2 and MT-CO3, encoded in the mitochondrial DNA, and 11 supernumerary subunits COX4I1 (or COX4I2), COX5A, COX5B, COX6A1 (or COX6A2), COX6B1 (or COX6B2), COX6C, COX7A2 (or COX7A1), COX7B, COX7C, COX8A and NDUFA4, which are encoded in the nuclear genome (PubMed:30030519). The complex exists as a monomer or a dimer and forms supercomplexes (SCs) in the inner mitochondrial membrane with NADH-ubiquinone oxidoreductase (complex I, CI) and ubiquinol-cytochrome c oxidoreductase (cytochrome b-c1 complex, complex III, CIII), resulting in different assemblies (supercomplex SCI(1)III(2)IV(1) and megacomplex MCI(2)III(2)IV(2)) (PubMed:28844695).</text>
</comment>
<comment type="interaction">
    <interactant intactId="EBI-2684371">
        <id>P24311</id>
    </interactant>
    <interactant intactId="EBI-744239">
        <id>Q14749</id>
        <label>GNMT</label>
    </interactant>
    <organismsDiffer>false</organismsDiffer>
    <experiments>3</experiments>
</comment>
<comment type="subcellular location">
    <subcellularLocation>
        <location evidence="5">Mitochondrion inner membrane</location>
        <topology evidence="5">Single-pass membrane protein</topology>
    </subcellularLocation>
</comment>
<comment type="disease" evidence="3">
    <disease id="DI-03628">
        <name>Linear skin defects with multiple congenital anomalies 2</name>
        <acronym>LSDMCA2</acronym>
        <description>A distinct form of aplasia cutis congenita presenting as multiple linear skin defects on the face and neck associated with poor growth, microcephaly, and facial dysmorphism. Additional features include intellectual disability, nail dystrophy, short stature and cardiac abnormalities.</description>
        <dbReference type="MIM" id="300887"/>
    </disease>
    <text>The disease is caused by variants affecting the gene represented in this entry.</text>
</comment>
<comment type="similarity">
    <text evidence="6">Belongs to the cytochrome c oxidase VIIb family.</text>
</comment>
<gene>
    <name type="primary">COX7B</name>
</gene>
<dbReference type="EMBL" id="Z14244">
    <property type="protein sequence ID" value="CAA78613.1"/>
    <property type="molecule type" value="mRNA"/>
</dbReference>
<dbReference type="EMBL" id="BT009767">
    <property type="protein sequence ID" value="AAP88769.1"/>
    <property type="molecule type" value="mRNA"/>
</dbReference>
<dbReference type="EMBL" id="CR450332">
    <property type="protein sequence ID" value="CAG29328.1"/>
    <property type="molecule type" value="mRNA"/>
</dbReference>
<dbReference type="EMBL" id="CR542124">
    <property type="protein sequence ID" value="CAG46921.1"/>
    <property type="molecule type" value="mRNA"/>
</dbReference>
<dbReference type="EMBL" id="AK311879">
    <property type="protein sequence ID" value="BAG34820.1"/>
    <property type="molecule type" value="mRNA"/>
</dbReference>
<dbReference type="EMBL" id="AL356235">
    <property type="status" value="NOT_ANNOTATED_CDS"/>
    <property type="molecule type" value="Genomic_DNA"/>
</dbReference>
<dbReference type="EMBL" id="CH471104">
    <property type="protein sequence ID" value="EAW98607.1"/>
    <property type="molecule type" value="Genomic_DNA"/>
</dbReference>
<dbReference type="EMBL" id="BC018386">
    <property type="protein sequence ID" value="AAH18386.1"/>
    <property type="molecule type" value="mRNA"/>
</dbReference>
<dbReference type="CCDS" id="CCDS14437.1"/>
<dbReference type="PIR" id="S29856">
    <property type="entry name" value="OSHU7B"/>
</dbReference>
<dbReference type="RefSeq" id="NP_001857.1">
    <property type="nucleotide sequence ID" value="NM_001866.3"/>
</dbReference>
<dbReference type="PDB" id="5Z62">
    <property type="method" value="EM"/>
    <property type="resolution" value="3.60 A"/>
    <property type="chains" value="K=30-78"/>
</dbReference>
<dbReference type="PDBsum" id="5Z62"/>
<dbReference type="SMR" id="P24311"/>
<dbReference type="BioGRID" id="107742">
    <property type="interactions" value="20"/>
</dbReference>
<dbReference type="ComplexPortal" id="CPX-6123">
    <property type="entry name" value="Mitochondrial respiratory chain complex IV"/>
</dbReference>
<dbReference type="CORUM" id="P24311"/>
<dbReference type="FunCoup" id="P24311">
    <property type="interactions" value="303"/>
</dbReference>
<dbReference type="IntAct" id="P24311">
    <property type="interactions" value="5"/>
</dbReference>
<dbReference type="STRING" id="9606.ENSP00000497474"/>
<dbReference type="DrugBank" id="DB02659">
    <property type="generic name" value="Cholic Acid"/>
</dbReference>
<dbReference type="DrugBank" id="DB04464">
    <property type="generic name" value="N-Formylmethionine"/>
</dbReference>
<dbReference type="iPTMnet" id="P24311"/>
<dbReference type="PhosphoSitePlus" id="P24311"/>
<dbReference type="BioMuta" id="COX7B"/>
<dbReference type="DMDM" id="461804"/>
<dbReference type="jPOST" id="P24311"/>
<dbReference type="MassIVE" id="P24311"/>
<dbReference type="PaxDb" id="9606-ENSP00000417656"/>
<dbReference type="PeptideAtlas" id="P24311"/>
<dbReference type="ProteomicsDB" id="54196"/>
<dbReference type="Pumba" id="P24311"/>
<dbReference type="TopDownProteomics" id="P24311"/>
<dbReference type="Antibodypedia" id="44006">
    <property type="antibodies" value="89 antibodies from 25 providers"/>
</dbReference>
<dbReference type="DNASU" id="1349"/>
<dbReference type="Ensembl" id="ENST00000650309.2">
    <property type="protein sequence ID" value="ENSP00000497474.1"/>
    <property type="gene ID" value="ENSG00000131174.7"/>
</dbReference>
<dbReference type="GeneID" id="1349"/>
<dbReference type="KEGG" id="hsa:1349"/>
<dbReference type="MANE-Select" id="ENST00000650309.2">
    <property type="protein sequence ID" value="ENSP00000497474.1"/>
    <property type="RefSeq nucleotide sequence ID" value="NM_001866.3"/>
    <property type="RefSeq protein sequence ID" value="NP_001857.1"/>
</dbReference>
<dbReference type="UCSC" id="uc004ecu.2">
    <property type="organism name" value="human"/>
</dbReference>
<dbReference type="AGR" id="HGNC:2291"/>
<dbReference type="CTD" id="1349"/>
<dbReference type="DisGeNET" id="1349"/>
<dbReference type="GeneCards" id="COX7B"/>
<dbReference type="GeneReviews" id="COX7B"/>
<dbReference type="HGNC" id="HGNC:2291">
    <property type="gene designation" value="COX7B"/>
</dbReference>
<dbReference type="HPA" id="ENSG00000131174">
    <property type="expression patterns" value="Tissue enhanced (skeletal muscle, tongue)"/>
</dbReference>
<dbReference type="MalaCards" id="COX7B"/>
<dbReference type="MIM" id="300885">
    <property type="type" value="gene"/>
</dbReference>
<dbReference type="MIM" id="300887">
    <property type="type" value="phenotype"/>
</dbReference>
<dbReference type="neXtProt" id="NX_P24311"/>
<dbReference type="OpenTargets" id="ENSG00000131174"/>
<dbReference type="Orphanet" id="2556">
    <property type="disease" value="Microphthalmia with linear skin defects syndrome"/>
</dbReference>
<dbReference type="PharmGKB" id="PA26809"/>
<dbReference type="VEuPathDB" id="HostDB:ENSG00000131174"/>
<dbReference type="eggNOG" id="ENOG502S9DG">
    <property type="taxonomic scope" value="Eukaryota"/>
</dbReference>
<dbReference type="GeneTree" id="ENSGT00390000012178"/>
<dbReference type="HOGENOM" id="CLU_172656_0_0_1"/>
<dbReference type="InParanoid" id="P24311"/>
<dbReference type="OMA" id="CIQLPIA"/>
<dbReference type="OrthoDB" id="9937520at2759"/>
<dbReference type="PAN-GO" id="P24311">
    <property type="GO annotations" value="2 GO annotations based on evolutionary models"/>
</dbReference>
<dbReference type="PhylomeDB" id="P24311"/>
<dbReference type="TreeFam" id="TF105068"/>
<dbReference type="BioCyc" id="MetaCyc:HS05498-MONOMER"/>
<dbReference type="PathwayCommons" id="P24311"/>
<dbReference type="Reactome" id="R-HSA-5628897">
    <property type="pathway name" value="TP53 Regulates Metabolic Genes"/>
</dbReference>
<dbReference type="Reactome" id="R-HSA-611105">
    <property type="pathway name" value="Respiratory electron transport"/>
</dbReference>
<dbReference type="Reactome" id="R-HSA-9707564">
    <property type="pathway name" value="Cytoprotection by HMOX1"/>
</dbReference>
<dbReference type="Reactome" id="R-HSA-9864848">
    <property type="pathway name" value="Complex IV assembly"/>
</dbReference>
<dbReference type="SignaLink" id="P24311"/>
<dbReference type="SIGNOR" id="P24311"/>
<dbReference type="UniPathway" id="UPA00705"/>
<dbReference type="BioGRID-ORCS" id="1349">
    <property type="hits" value="248 hits in 710 CRISPR screens"/>
</dbReference>
<dbReference type="ChiTaRS" id="COX7B">
    <property type="organism name" value="human"/>
</dbReference>
<dbReference type="GeneWiki" id="COX7B"/>
<dbReference type="GenomeRNAi" id="1349"/>
<dbReference type="Pharos" id="P24311">
    <property type="development level" value="Tbio"/>
</dbReference>
<dbReference type="PRO" id="PR:P24311"/>
<dbReference type="Proteomes" id="UP000005640">
    <property type="component" value="Chromosome X"/>
</dbReference>
<dbReference type="RNAct" id="P24311">
    <property type="molecule type" value="protein"/>
</dbReference>
<dbReference type="Bgee" id="ENSG00000131174">
    <property type="expression patterns" value="Expressed in heart right ventricle and 213 other cell types or tissues"/>
</dbReference>
<dbReference type="ExpressionAtlas" id="P24311">
    <property type="expression patterns" value="baseline and differential"/>
</dbReference>
<dbReference type="GO" id="GO:0005743">
    <property type="term" value="C:mitochondrial inner membrane"/>
    <property type="evidence" value="ECO:0000304"/>
    <property type="project" value="Reactome"/>
</dbReference>
<dbReference type="GO" id="GO:0031966">
    <property type="term" value="C:mitochondrial membrane"/>
    <property type="evidence" value="ECO:0000314"/>
    <property type="project" value="ComplexPortal"/>
</dbReference>
<dbReference type="GO" id="GO:0005739">
    <property type="term" value="C:mitochondrion"/>
    <property type="evidence" value="ECO:0006056"/>
    <property type="project" value="FlyBase"/>
</dbReference>
<dbReference type="GO" id="GO:0045277">
    <property type="term" value="C:respiratory chain complex IV"/>
    <property type="evidence" value="ECO:0000318"/>
    <property type="project" value="GO_Central"/>
</dbReference>
<dbReference type="GO" id="GO:0004129">
    <property type="term" value="F:cytochrome-c oxidase activity"/>
    <property type="evidence" value="ECO:0000304"/>
    <property type="project" value="ProtInc"/>
</dbReference>
<dbReference type="GO" id="GO:0045333">
    <property type="term" value="P:cellular respiration"/>
    <property type="evidence" value="ECO:0000303"/>
    <property type="project" value="ComplexPortal"/>
</dbReference>
<dbReference type="GO" id="GO:0007417">
    <property type="term" value="P:central nervous system development"/>
    <property type="evidence" value="ECO:0000315"/>
    <property type="project" value="UniProtKB"/>
</dbReference>
<dbReference type="GO" id="GO:0006123">
    <property type="term" value="P:mitochondrial electron transport, cytochrome c to oxygen"/>
    <property type="evidence" value="ECO:0000303"/>
    <property type="project" value="ComplexPortal"/>
</dbReference>
<dbReference type="CDD" id="cd01403">
    <property type="entry name" value="Cyt_c_Oxidase_VIIb"/>
    <property type="match status" value="1"/>
</dbReference>
<dbReference type="FunFam" id="4.10.51.10:FF:000001">
    <property type="entry name" value="Cytochrome c oxidase subunit 7B, mitochondrial"/>
    <property type="match status" value="1"/>
</dbReference>
<dbReference type="Gene3D" id="4.10.51.10">
    <property type="entry name" value="Cytochrome C Oxidase, chain K"/>
    <property type="match status" value="1"/>
</dbReference>
<dbReference type="InterPro" id="IPR008433">
    <property type="entry name" value="Cyt_c_oxidase_suVIIB"/>
</dbReference>
<dbReference type="InterPro" id="IPR023272">
    <property type="entry name" value="Cyt_c_oxidase_suVIIB_dom_sf"/>
</dbReference>
<dbReference type="PANTHER" id="PTHR16716">
    <property type="entry name" value="CYTOCHROME C OXIDASE SUBUNIT 7B, MITOCHONDRIAL"/>
    <property type="match status" value="1"/>
</dbReference>
<dbReference type="PANTHER" id="PTHR16716:SF0">
    <property type="entry name" value="CYTOCHROME C OXIDASE SUBUNIT 7B, MITOCHONDRIAL"/>
    <property type="match status" value="1"/>
</dbReference>
<dbReference type="Pfam" id="PF05392">
    <property type="entry name" value="COX7B"/>
    <property type="match status" value="1"/>
</dbReference>
<dbReference type="SUPFAM" id="SSF81423">
    <property type="entry name" value="Mitochondrial cytochrome c oxidase subunit VIIb"/>
    <property type="match status" value="1"/>
</dbReference>
<accession>P24311</accession>
<accession>B2R4M3</accession>
<accession>Q6ICR1</accession>
<evidence type="ECO:0000250" key="1">
    <source>
        <dbReference type="UniProtKB" id="P13183"/>
    </source>
</evidence>
<evidence type="ECO:0000269" key="2">
    <source>
    </source>
</evidence>
<evidence type="ECO:0000269" key="3">
    <source>
    </source>
</evidence>
<evidence type="ECO:0000269" key="4">
    <source>
    </source>
</evidence>
<evidence type="ECO:0000269" key="5">
    <source>
    </source>
</evidence>
<evidence type="ECO:0000305" key="6"/>
<name>COX7B_HUMAN</name>
<feature type="transit peptide" description="Mitochondrion" evidence="2">
    <location>
        <begin position="1"/>
        <end position="24"/>
    </location>
</feature>
<feature type="chain" id="PRO_0000006158" description="Cytochrome c oxidase subunit 7B, mitochondrial">
    <location>
        <begin position="25"/>
        <end position="80"/>
    </location>
</feature>
<feature type="topological domain" description="Mitochondrial matrix" evidence="5">
    <location>
        <begin position="25"/>
        <end position="32"/>
    </location>
</feature>
<feature type="transmembrane region" description="Helical" evidence="1">
    <location>
        <begin position="33"/>
        <end position="59"/>
    </location>
</feature>
<feature type="topological domain" description="Mitochondrial intermembrane" evidence="5">
    <location>
        <begin position="60"/>
        <end position="80"/>
    </location>
</feature>
<feature type="sequence conflict" description="In Ref. 9; AA sequence." evidence="6" ref="9">
    <original>R</original>
    <variation>P</variation>
    <location>
        <position position="29"/>
    </location>
</feature>
<reference key="1">
    <citation type="journal article" date="1993" name="Biochim. Biophys. Acta">
        <title>Isolation of a cDNA specifying subunit VIIb of human cytochrome c oxidase.</title>
        <authorList>
            <person name="Sadlock J.E."/>
            <person name="Lightowlers R.N."/>
            <person name="Capaldi R.A."/>
            <person name="Schon E.A."/>
        </authorList>
    </citation>
    <scope>NUCLEOTIDE SEQUENCE [MRNA]</scope>
</reference>
<reference key="2">
    <citation type="submission" date="2003-08" db="EMBL/GenBank/DDBJ databases">
        <title>Cloning of human full-length CDSs in BD Creator(TM) system donor vector.</title>
        <authorList>
            <person name="Kalnine N."/>
            <person name="Chen X."/>
            <person name="Rolfs A."/>
            <person name="Halleck A."/>
            <person name="Hines L."/>
            <person name="Eisenstein S."/>
            <person name="Koundinya M."/>
            <person name="Raphael J."/>
            <person name="Moreira D."/>
            <person name="Kelley T."/>
            <person name="LaBaer J."/>
            <person name="Lin Y."/>
            <person name="Phelan M."/>
            <person name="Farmer A."/>
        </authorList>
    </citation>
    <scope>NUCLEOTIDE SEQUENCE [LARGE SCALE MRNA]</scope>
</reference>
<reference key="3">
    <citation type="submission" date="2004-05" db="EMBL/GenBank/DDBJ databases">
        <title>Cloning of human full open reading frames in Gateway(TM) system entry vector (pDONR201).</title>
        <authorList>
            <person name="Ebert L."/>
            <person name="Schick M."/>
            <person name="Neubert P."/>
            <person name="Schatten R."/>
            <person name="Henze S."/>
            <person name="Korn B."/>
        </authorList>
    </citation>
    <scope>NUCLEOTIDE SEQUENCE [LARGE SCALE MRNA]</scope>
</reference>
<reference key="4">
    <citation type="submission" date="2004-06" db="EMBL/GenBank/DDBJ databases">
        <title>Cloning of human full open reading frames in Gateway(TM) system entry vector (pDONR201).</title>
        <authorList>
            <person name="Halleck A."/>
            <person name="Ebert L."/>
            <person name="Mkoundinya M."/>
            <person name="Schick M."/>
            <person name="Eisenstein S."/>
            <person name="Neubert P."/>
            <person name="Kstrang K."/>
            <person name="Schatten R."/>
            <person name="Shen B."/>
            <person name="Henze S."/>
            <person name="Mar W."/>
            <person name="Korn B."/>
            <person name="Zuo D."/>
            <person name="Hu Y."/>
            <person name="LaBaer J."/>
        </authorList>
    </citation>
    <scope>NUCLEOTIDE SEQUENCE [LARGE SCALE MRNA]</scope>
</reference>
<reference key="5">
    <citation type="journal article" date="2004" name="Nat. Genet.">
        <title>Complete sequencing and characterization of 21,243 full-length human cDNAs.</title>
        <authorList>
            <person name="Ota T."/>
            <person name="Suzuki Y."/>
            <person name="Nishikawa T."/>
            <person name="Otsuki T."/>
            <person name="Sugiyama T."/>
            <person name="Irie R."/>
            <person name="Wakamatsu A."/>
            <person name="Hayashi K."/>
            <person name="Sato H."/>
            <person name="Nagai K."/>
            <person name="Kimura K."/>
            <person name="Makita H."/>
            <person name="Sekine M."/>
            <person name="Obayashi M."/>
            <person name="Nishi T."/>
            <person name="Shibahara T."/>
            <person name="Tanaka T."/>
            <person name="Ishii S."/>
            <person name="Yamamoto J."/>
            <person name="Saito K."/>
            <person name="Kawai Y."/>
            <person name="Isono Y."/>
            <person name="Nakamura Y."/>
            <person name="Nagahari K."/>
            <person name="Murakami K."/>
            <person name="Yasuda T."/>
            <person name="Iwayanagi T."/>
            <person name="Wagatsuma M."/>
            <person name="Shiratori A."/>
            <person name="Sudo H."/>
            <person name="Hosoiri T."/>
            <person name="Kaku Y."/>
            <person name="Kodaira H."/>
            <person name="Kondo H."/>
            <person name="Sugawara M."/>
            <person name="Takahashi M."/>
            <person name="Kanda K."/>
            <person name="Yokoi T."/>
            <person name="Furuya T."/>
            <person name="Kikkawa E."/>
            <person name="Omura Y."/>
            <person name="Abe K."/>
            <person name="Kamihara K."/>
            <person name="Katsuta N."/>
            <person name="Sato K."/>
            <person name="Tanikawa M."/>
            <person name="Yamazaki M."/>
            <person name="Ninomiya K."/>
            <person name="Ishibashi T."/>
            <person name="Yamashita H."/>
            <person name="Murakawa K."/>
            <person name="Fujimori K."/>
            <person name="Tanai H."/>
            <person name="Kimata M."/>
            <person name="Watanabe M."/>
            <person name="Hiraoka S."/>
            <person name="Chiba Y."/>
            <person name="Ishida S."/>
            <person name="Ono Y."/>
            <person name="Takiguchi S."/>
            <person name="Watanabe S."/>
            <person name="Yosida M."/>
            <person name="Hotuta T."/>
            <person name="Kusano J."/>
            <person name="Kanehori K."/>
            <person name="Takahashi-Fujii A."/>
            <person name="Hara H."/>
            <person name="Tanase T.-O."/>
            <person name="Nomura Y."/>
            <person name="Togiya S."/>
            <person name="Komai F."/>
            <person name="Hara R."/>
            <person name="Takeuchi K."/>
            <person name="Arita M."/>
            <person name="Imose N."/>
            <person name="Musashino K."/>
            <person name="Yuuki H."/>
            <person name="Oshima A."/>
            <person name="Sasaki N."/>
            <person name="Aotsuka S."/>
            <person name="Yoshikawa Y."/>
            <person name="Matsunawa H."/>
            <person name="Ichihara T."/>
            <person name="Shiohata N."/>
            <person name="Sano S."/>
            <person name="Moriya S."/>
            <person name="Momiyama H."/>
            <person name="Satoh N."/>
            <person name="Takami S."/>
            <person name="Terashima Y."/>
            <person name="Suzuki O."/>
            <person name="Nakagawa S."/>
            <person name="Senoh A."/>
            <person name="Mizoguchi H."/>
            <person name="Goto Y."/>
            <person name="Shimizu F."/>
            <person name="Wakebe H."/>
            <person name="Hishigaki H."/>
            <person name="Watanabe T."/>
            <person name="Sugiyama A."/>
            <person name="Takemoto M."/>
            <person name="Kawakami B."/>
            <person name="Yamazaki M."/>
            <person name="Watanabe K."/>
            <person name="Kumagai A."/>
            <person name="Itakura S."/>
            <person name="Fukuzumi Y."/>
            <person name="Fujimori Y."/>
            <person name="Komiyama M."/>
            <person name="Tashiro H."/>
            <person name="Tanigami A."/>
            <person name="Fujiwara T."/>
            <person name="Ono T."/>
            <person name="Yamada K."/>
            <person name="Fujii Y."/>
            <person name="Ozaki K."/>
            <person name="Hirao M."/>
            <person name="Ohmori Y."/>
            <person name="Kawabata A."/>
            <person name="Hikiji T."/>
            <person name="Kobatake N."/>
            <person name="Inagaki H."/>
            <person name="Ikema Y."/>
            <person name="Okamoto S."/>
            <person name="Okitani R."/>
            <person name="Kawakami T."/>
            <person name="Noguchi S."/>
            <person name="Itoh T."/>
            <person name="Shigeta K."/>
            <person name="Senba T."/>
            <person name="Matsumura K."/>
            <person name="Nakajima Y."/>
            <person name="Mizuno T."/>
            <person name="Morinaga M."/>
            <person name="Sasaki M."/>
            <person name="Togashi T."/>
            <person name="Oyama M."/>
            <person name="Hata H."/>
            <person name="Watanabe M."/>
            <person name="Komatsu T."/>
            <person name="Mizushima-Sugano J."/>
            <person name="Satoh T."/>
            <person name="Shirai Y."/>
            <person name="Takahashi Y."/>
            <person name="Nakagawa K."/>
            <person name="Okumura K."/>
            <person name="Nagase T."/>
            <person name="Nomura N."/>
            <person name="Kikuchi H."/>
            <person name="Masuho Y."/>
            <person name="Yamashita R."/>
            <person name="Nakai K."/>
            <person name="Yada T."/>
            <person name="Nakamura Y."/>
            <person name="Ohara O."/>
            <person name="Isogai T."/>
            <person name="Sugano S."/>
        </authorList>
    </citation>
    <scope>NUCLEOTIDE SEQUENCE [LARGE SCALE MRNA]</scope>
</reference>
<reference key="6">
    <citation type="journal article" date="2005" name="Nature">
        <title>The DNA sequence of the human X chromosome.</title>
        <authorList>
            <person name="Ross M.T."/>
            <person name="Grafham D.V."/>
            <person name="Coffey A.J."/>
            <person name="Scherer S."/>
            <person name="McLay K."/>
            <person name="Muzny D."/>
            <person name="Platzer M."/>
            <person name="Howell G.R."/>
            <person name="Burrows C."/>
            <person name="Bird C.P."/>
            <person name="Frankish A."/>
            <person name="Lovell F.L."/>
            <person name="Howe K.L."/>
            <person name="Ashurst J.L."/>
            <person name="Fulton R.S."/>
            <person name="Sudbrak R."/>
            <person name="Wen G."/>
            <person name="Jones M.C."/>
            <person name="Hurles M.E."/>
            <person name="Andrews T.D."/>
            <person name="Scott C.E."/>
            <person name="Searle S."/>
            <person name="Ramser J."/>
            <person name="Whittaker A."/>
            <person name="Deadman R."/>
            <person name="Carter N.P."/>
            <person name="Hunt S.E."/>
            <person name="Chen R."/>
            <person name="Cree A."/>
            <person name="Gunaratne P."/>
            <person name="Havlak P."/>
            <person name="Hodgson A."/>
            <person name="Metzker M.L."/>
            <person name="Richards S."/>
            <person name="Scott G."/>
            <person name="Steffen D."/>
            <person name="Sodergren E."/>
            <person name="Wheeler D.A."/>
            <person name="Worley K.C."/>
            <person name="Ainscough R."/>
            <person name="Ambrose K.D."/>
            <person name="Ansari-Lari M.A."/>
            <person name="Aradhya S."/>
            <person name="Ashwell R.I."/>
            <person name="Babbage A.K."/>
            <person name="Bagguley C.L."/>
            <person name="Ballabio A."/>
            <person name="Banerjee R."/>
            <person name="Barker G.E."/>
            <person name="Barlow K.F."/>
            <person name="Barrett I.P."/>
            <person name="Bates K.N."/>
            <person name="Beare D.M."/>
            <person name="Beasley H."/>
            <person name="Beasley O."/>
            <person name="Beck A."/>
            <person name="Bethel G."/>
            <person name="Blechschmidt K."/>
            <person name="Brady N."/>
            <person name="Bray-Allen S."/>
            <person name="Bridgeman A.M."/>
            <person name="Brown A.J."/>
            <person name="Brown M.J."/>
            <person name="Bonnin D."/>
            <person name="Bruford E.A."/>
            <person name="Buhay C."/>
            <person name="Burch P."/>
            <person name="Burford D."/>
            <person name="Burgess J."/>
            <person name="Burrill W."/>
            <person name="Burton J."/>
            <person name="Bye J.M."/>
            <person name="Carder C."/>
            <person name="Carrel L."/>
            <person name="Chako J."/>
            <person name="Chapman J.C."/>
            <person name="Chavez D."/>
            <person name="Chen E."/>
            <person name="Chen G."/>
            <person name="Chen Y."/>
            <person name="Chen Z."/>
            <person name="Chinault C."/>
            <person name="Ciccodicola A."/>
            <person name="Clark S.Y."/>
            <person name="Clarke G."/>
            <person name="Clee C.M."/>
            <person name="Clegg S."/>
            <person name="Clerc-Blankenburg K."/>
            <person name="Clifford K."/>
            <person name="Cobley V."/>
            <person name="Cole C.G."/>
            <person name="Conquer J.S."/>
            <person name="Corby N."/>
            <person name="Connor R.E."/>
            <person name="David R."/>
            <person name="Davies J."/>
            <person name="Davis C."/>
            <person name="Davis J."/>
            <person name="Delgado O."/>
            <person name="Deshazo D."/>
            <person name="Dhami P."/>
            <person name="Ding Y."/>
            <person name="Dinh H."/>
            <person name="Dodsworth S."/>
            <person name="Draper H."/>
            <person name="Dugan-Rocha S."/>
            <person name="Dunham A."/>
            <person name="Dunn M."/>
            <person name="Durbin K.J."/>
            <person name="Dutta I."/>
            <person name="Eades T."/>
            <person name="Ellwood M."/>
            <person name="Emery-Cohen A."/>
            <person name="Errington H."/>
            <person name="Evans K.L."/>
            <person name="Faulkner L."/>
            <person name="Francis F."/>
            <person name="Frankland J."/>
            <person name="Fraser A.E."/>
            <person name="Galgoczy P."/>
            <person name="Gilbert J."/>
            <person name="Gill R."/>
            <person name="Gloeckner G."/>
            <person name="Gregory S.G."/>
            <person name="Gribble S."/>
            <person name="Griffiths C."/>
            <person name="Grocock R."/>
            <person name="Gu Y."/>
            <person name="Gwilliam R."/>
            <person name="Hamilton C."/>
            <person name="Hart E.A."/>
            <person name="Hawes A."/>
            <person name="Heath P.D."/>
            <person name="Heitmann K."/>
            <person name="Hennig S."/>
            <person name="Hernandez J."/>
            <person name="Hinzmann B."/>
            <person name="Ho S."/>
            <person name="Hoffs M."/>
            <person name="Howden P.J."/>
            <person name="Huckle E.J."/>
            <person name="Hume J."/>
            <person name="Hunt P.J."/>
            <person name="Hunt A.R."/>
            <person name="Isherwood J."/>
            <person name="Jacob L."/>
            <person name="Johnson D."/>
            <person name="Jones S."/>
            <person name="de Jong P.J."/>
            <person name="Joseph S.S."/>
            <person name="Keenan S."/>
            <person name="Kelly S."/>
            <person name="Kershaw J.K."/>
            <person name="Khan Z."/>
            <person name="Kioschis P."/>
            <person name="Klages S."/>
            <person name="Knights A.J."/>
            <person name="Kosiura A."/>
            <person name="Kovar-Smith C."/>
            <person name="Laird G.K."/>
            <person name="Langford C."/>
            <person name="Lawlor S."/>
            <person name="Leversha M."/>
            <person name="Lewis L."/>
            <person name="Liu W."/>
            <person name="Lloyd C."/>
            <person name="Lloyd D.M."/>
            <person name="Loulseged H."/>
            <person name="Loveland J.E."/>
            <person name="Lovell J.D."/>
            <person name="Lozado R."/>
            <person name="Lu J."/>
            <person name="Lyne R."/>
            <person name="Ma J."/>
            <person name="Maheshwari M."/>
            <person name="Matthews L.H."/>
            <person name="McDowall J."/>
            <person name="McLaren S."/>
            <person name="McMurray A."/>
            <person name="Meidl P."/>
            <person name="Meitinger T."/>
            <person name="Milne S."/>
            <person name="Miner G."/>
            <person name="Mistry S.L."/>
            <person name="Morgan M."/>
            <person name="Morris S."/>
            <person name="Mueller I."/>
            <person name="Mullikin J.C."/>
            <person name="Nguyen N."/>
            <person name="Nordsiek G."/>
            <person name="Nyakatura G."/>
            <person name="O'dell C.N."/>
            <person name="Okwuonu G."/>
            <person name="Palmer S."/>
            <person name="Pandian R."/>
            <person name="Parker D."/>
            <person name="Parrish J."/>
            <person name="Pasternak S."/>
            <person name="Patel D."/>
            <person name="Pearce A.V."/>
            <person name="Pearson D.M."/>
            <person name="Pelan S.E."/>
            <person name="Perez L."/>
            <person name="Porter K.M."/>
            <person name="Ramsey Y."/>
            <person name="Reichwald K."/>
            <person name="Rhodes S."/>
            <person name="Ridler K.A."/>
            <person name="Schlessinger D."/>
            <person name="Schueler M.G."/>
            <person name="Sehra H.K."/>
            <person name="Shaw-Smith C."/>
            <person name="Shen H."/>
            <person name="Sheridan E.M."/>
            <person name="Shownkeen R."/>
            <person name="Skuce C.D."/>
            <person name="Smith M.L."/>
            <person name="Sotheran E.C."/>
            <person name="Steingruber H.E."/>
            <person name="Steward C.A."/>
            <person name="Storey R."/>
            <person name="Swann R.M."/>
            <person name="Swarbreck D."/>
            <person name="Tabor P.E."/>
            <person name="Taudien S."/>
            <person name="Taylor T."/>
            <person name="Teague B."/>
            <person name="Thomas K."/>
            <person name="Thorpe A."/>
            <person name="Timms K."/>
            <person name="Tracey A."/>
            <person name="Trevanion S."/>
            <person name="Tromans A.C."/>
            <person name="d'Urso M."/>
            <person name="Verduzco D."/>
            <person name="Villasana D."/>
            <person name="Waldron L."/>
            <person name="Wall M."/>
            <person name="Wang Q."/>
            <person name="Warren J."/>
            <person name="Warry G.L."/>
            <person name="Wei X."/>
            <person name="West A."/>
            <person name="Whitehead S.L."/>
            <person name="Whiteley M.N."/>
            <person name="Wilkinson J.E."/>
            <person name="Willey D.L."/>
            <person name="Williams G."/>
            <person name="Williams L."/>
            <person name="Williamson A."/>
            <person name="Williamson H."/>
            <person name="Wilming L."/>
            <person name="Woodmansey R.L."/>
            <person name="Wray P.W."/>
            <person name="Yen J."/>
            <person name="Zhang J."/>
            <person name="Zhou J."/>
            <person name="Zoghbi H."/>
            <person name="Zorilla S."/>
            <person name="Buck D."/>
            <person name="Reinhardt R."/>
            <person name="Poustka A."/>
            <person name="Rosenthal A."/>
            <person name="Lehrach H."/>
            <person name="Meindl A."/>
            <person name="Minx P.J."/>
            <person name="Hillier L.W."/>
            <person name="Willard H.F."/>
            <person name="Wilson R.K."/>
            <person name="Waterston R.H."/>
            <person name="Rice C.M."/>
            <person name="Vaudin M."/>
            <person name="Coulson A."/>
            <person name="Nelson D.L."/>
            <person name="Weinstock G."/>
            <person name="Sulston J.E."/>
            <person name="Durbin R.M."/>
            <person name="Hubbard T."/>
            <person name="Gibbs R.A."/>
            <person name="Beck S."/>
            <person name="Rogers J."/>
            <person name="Bentley D.R."/>
        </authorList>
    </citation>
    <scope>NUCLEOTIDE SEQUENCE [LARGE SCALE GENOMIC DNA]</scope>
</reference>
<reference key="7">
    <citation type="submission" date="2005-09" db="EMBL/GenBank/DDBJ databases">
        <authorList>
            <person name="Mural R.J."/>
            <person name="Istrail S."/>
            <person name="Sutton G.G."/>
            <person name="Florea L."/>
            <person name="Halpern A.L."/>
            <person name="Mobarry C.M."/>
            <person name="Lippert R."/>
            <person name="Walenz B."/>
            <person name="Shatkay H."/>
            <person name="Dew I."/>
            <person name="Miller J.R."/>
            <person name="Flanigan M.J."/>
            <person name="Edwards N.J."/>
            <person name="Bolanos R."/>
            <person name="Fasulo D."/>
            <person name="Halldorsson B.V."/>
            <person name="Hannenhalli S."/>
            <person name="Turner R."/>
            <person name="Yooseph S."/>
            <person name="Lu F."/>
            <person name="Nusskern D.R."/>
            <person name="Shue B.C."/>
            <person name="Zheng X.H."/>
            <person name="Zhong F."/>
            <person name="Delcher A.L."/>
            <person name="Huson D.H."/>
            <person name="Kravitz S.A."/>
            <person name="Mouchard L."/>
            <person name="Reinert K."/>
            <person name="Remington K.A."/>
            <person name="Clark A.G."/>
            <person name="Waterman M.S."/>
            <person name="Eichler E.E."/>
            <person name="Adams M.D."/>
            <person name="Hunkapiller M.W."/>
            <person name="Myers E.W."/>
            <person name="Venter J.C."/>
        </authorList>
    </citation>
    <scope>NUCLEOTIDE SEQUENCE [LARGE SCALE GENOMIC DNA]</scope>
</reference>
<reference key="8">
    <citation type="journal article" date="2004" name="Genome Res.">
        <title>The status, quality, and expansion of the NIH full-length cDNA project: the Mammalian Gene Collection (MGC).</title>
        <authorList>
            <consortium name="The MGC Project Team"/>
        </authorList>
    </citation>
    <scope>NUCLEOTIDE SEQUENCE [LARGE SCALE MRNA]</scope>
    <source>
        <tissue>Ovary</tissue>
    </source>
</reference>
<reference key="9">
    <citation type="journal article" date="1992" name="Eur. J. Biochem.">
        <title>Subunits VIIa,b,c of human cytochrome c oxidase. Identification of both 'heart-type' and 'liver-type' isoforms of subunit VIIa in human heart.</title>
        <authorList>
            <person name="van Kuilenburg A.B.P."/>
            <person name="van Beeumen J.J."/>
            <person name="van der Meer N.M."/>
            <person name="Muijsers A.O."/>
        </authorList>
    </citation>
    <scope>PROTEIN SEQUENCE OF 25-43</scope>
    <source>
        <tissue>Heart</tissue>
    </source>
</reference>
<reference key="10">
    <citation type="journal article" date="2012" name="Am. J. Hum. Genet.">
        <title>Mutations in COX7B cause microphthalmia with linear skin lesions, an unconventional mitochondrial disease.</title>
        <authorList>
            <person name="Indrieri A."/>
            <person name="van Rahden V.A."/>
            <person name="Tiranti V."/>
            <person name="Morleo M."/>
            <person name="Iaconis D."/>
            <person name="Tammaro R."/>
            <person name="D'Amato I."/>
            <person name="Conte I."/>
            <person name="Maystadt I."/>
            <person name="Demuth S."/>
            <person name="Zvulunov A."/>
            <person name="Kutsche K."/>
            <person name="Zeviani M."/>
            <person name="Franco B."/>
        </authorList>
    </citation>
    <scope>FUNCTION</scope>
    <scope>INVOLVEMENT IN LSDMCA2</scope>
</reference>
<reference key="11">
    <citation type="journal article" date="2017" name="Cell">
        <title>Architecture of human mitochondrial respiratory megacomplex I2III2IV2.</title>
        <authorList>
            <person name="Guo R."/>
            <person name="Zong S."/>
            <person name="Wu M."/>
            <person name="Gu J."/>
            <person name="Yang M."/>
        </authorList>
    </citation>
    <scope>STRUCTURE BY ELECTRON MICROSCOPY (3.90 ANGSTROMS)</scope>
    <scope>SUBUNIT</scope>
</reference>
<reference key="12">
    <citation type="journal article" date="2018" name="Cell Res.">
        <title>Structure of the intact 14-subunit human cytochrome c oxidase.</title>
        <authorList>
            <person name="Zong S."/>
            <person name="Wu M."/>
            <person name="Gu J."/>
            <person name="Liu T."/>
            <person name="Guo R."/>
            <person name="Yang M."/>
        </authorList>
    </citation>
    <scope>STRUCTURE BY ELECTRON MICROSCOPY (3.60 ANGSTROMS) OF 30-78</scope>
</reference>
<sequence>MFPLVKSALNRLQVRSIQQTMARQSHQKRTPDFHDKYGNAVLASGATFCIVTWTYVATQVGIEWNLSPVGRVTPKEWRNQ</sequence>
<protein>
    <recommendedName>
        <fullName>Cytochrome c oxidase subunit 7B, mitochondrial</fullName>
    </recommendedName>
    <alternativeName>
        <fullName>Cytochrome c oxidase polypeptide VIIb</fullName>
    </alternativeName>
</protein>
<keyword id="KW-0002">3D-structure</keyword>
<keyword id="KW-0903">Direct protein sequencing</keyword>
<keyword id="KW-0472">Membrane</keyword>
<keyword id="KW-0496">Mitochondrion</keyword>
<keyword id="KW-0999">Mitochondrion inner membrane</keyword>
<keyword id="KW-1267">Proteomics identification</keyword>
<keyword id="KW-1185">Reference proteome</keyword>
<keyword id="KW-0809">Transit peptide</keyword>
<keyword id="KW-0812">Transmembrane</keyword>
<keyword id="KW-1133">Transmembrane helix</keyword>
<organism>
    <name type="scientific">Homo sapiens</name>
    <name type="common">Human</name>
    <dbReference type="NCBI Taxonomy" id="9606"/>
    <lineage>
        <taxon>Eukaryota</taxon>
        <taxon>Metazoa</taxon>
        <taxon>Chordata</taxon>
        <taxon>Craniata</taxon>
        <taxon>Vertebrata</taxon>
        <taxon>Euteleostomi</taxon>
        <taxon>Mammalia</taxon>
        <taxon>Eutheria</taxon>
        <taxon>Euarchontoglires</taxon>
        <taxon>Primates</taxon>
        <taxon>Haplorrhini</taxon>
        <taxon>Catarrhini</taxon>
        <taxon>Hominidae</taxon>
        <taxon>Homo</taxon>
    </lineage>
</organism>